<dbReference type="EC" id="5.1.1.3" evidence="1"/>
<dbReference type="EMBL" id="CP000259">
    <property type="protein sequence ID" value="ABF31490.1"/>
    <property type="molecule type" value="Genomic_DNA"/>
</dbReference>
<dbReference type="SMR" id="Q1JNA9"/>
<dbReference type="KEGG" id="spk:MGAS9429_Spy0302"/>
<dbReference type="HOGENOM" id="CLU_052344_0_2_9"/>
<dbReference type="UniPathway" id="UPA00219"/>
<dbReference type="Proteomes" id="UP000002433">
    <property type="component" value="Chromosome"/>
</dbReference>
<dbReference type="GO" id="GO:0008881">
    <property type="term" value="F:glutamate racemase activity"/>
    <property type="evidence" value="ECO:0007669"/>
    <property type="project" value="UniProtKB-UniRule"/>
</dbReference>
<dbReference type="GO" id="GO:0071555">
    <property type="term" value="P:cell wall organization"/>
    <property type="evidence" value="ECO:0007669"/>
    <property type="project" value="UniProtKB-KW"/>
</dbReference>
<dbReference type="GO" id="GO:0009252">
    <property type="term" value="P:peptidoglycan biosynthetic process"/>
    <property type="evidence" value="ECO:0007669"/>
    <property type="project" value="UniProtKB-UniRule"/>
</dbReference>
<dbReference type="GO" id="GO:0008360">
    <property type="term" value="P:regulation of cell shape"/>
    <property type="evidence" value="ECO:0007669"/>
    <property type="project" value="UniProtKB-KW"/>
</dbReference>
<dbReference type="FunFam" id="3.40.50.1860:FF:000002">
    <property type="entry name" value="Glutamate racemase"/>
    <property type="match status" value="1"/>
</dbReference>
<dbReference type="Gene3D" id="3.40.50.1860">
    <property type="match status" value="2"/>
</dbReference>
<dbReference type="HAMAP" id="MF_00258">
    <property type="entry name" value="Glu_racemase"/>
    <property type="match status" value="1"/>
</dbReference>
<dbReference type="InterPro" id="IPR015942">
    <property type="entry name" value="Asp/Glu/hydantoin_racemase"/>
</dbReference>
<dbReference type="InterPro" id="IPR001920">
    <property type="entry name" value="Asp/Glu_race"/>
</dbReference>
<dbReference type="InterPro" id="IPR033134">
    <property type="entry name" value="Asp/Glu_racemase_AS_2"/>
</dbReference>
<dbReference type="InterPro" id="IPR004391">
    <property type="entry name" value="Glu_race"/>
</dbReference>
<dbReference type="NCBIfam" id="TIGR00067">
    <property type="entry name" value="glut_race"/>
    <property type="match status" value="1"/>
</dbReference>
<dbReference type="NCBIfam" id="NF002035">
    <property type="entry name" value="PRK00865.1-3"/>
    <property type="match status" value="1"/>
</dbReference>
<dbReference type="PANTHER" id="PTHR21198">
    <property type="entry name" value="GLUTAMATE RACEMASE"/>
    <property type="match status" value="1"/>
</dbReference>
<dbReference type="PANTHER" id="PTHR21198:SF2">
    <property type="entry name" value="GLUTAMATE RACEMASE"/>
    <property type="match status" value="1"/>
</dbReference>
<dbReference type="Pfam" id="PF01177">
    <property type="entry name" value="Asp_Glu_race"/>
    <property type="match status" value="1"/>
</dbReference>
<dbReference type="SUPFAM" id="SSF53681">
    <property type="entry name" value="Aspartate/glutamate racemase"/>
    <property type="match status" value="2"/>
</dbReference>
<dbReference type="PROSITE" id="PS00924">
    <property type="entry name" value="ASP_GLU_RACEMASE_2"/>
    <property type="match status" value="1"/>
</dbReference>
<protein>
    <recommendedName>
        <fullName evidence="1">Glutamate racemase</fullName>
        <ecNumber evidence="1">5.1.1.3</ecNumber>
    </recommendedName>
</protein>
<comment type="function">
    <text evidence="1">Provides the (R)-glutamate required for cell wall biosynthesis.</text>
</comment>
<comment type="catalytic activity">
    <reaction evidence="1">
        <text>L-glutamate = D-glutamate</text>
        <dbReference type="Rhea" id="RHEA:12813"/>
        <dbReference type="ChEBI" id="CHEBI:29985"/>
        <dbReference type="ChEBI" id="CHEBI:29986"/>
        <dbReference type="EC" id="5.1.1.3"/>
    </reaction>
</comment>
<comment type="pathway">
    <text evidence="1">Cell wall biogenesis; peptidoglycan biosynthesis.</text>
</comment>
<comment type="similarity">
    <text evidence="1">Belongs to the aspartate/glutamate racemases family.</text>
</comment>
<sequence length="264" mass="29015">MDTRPIGFLDSGVGGLTVVCELIRQLPHEKIVYIGDSARAPYGPRPKKQIKEYTWELVNFLLTQNVKMIVFACNTATAVAWEEVKAALDIPVLGVVLPGASAAIKSTTKGQVGVIGTPMTVASDIYRKKIQLLAPSIQVRSLACPKFVPIVESNEMCSSIAKKIVYDSLAPLVGKIDTLVLGCTHYPLLRPIIQNVMGPSVKLIDSGAECVRDISVLLNYFDINGNYHQKAVKHRFFTTANPEIFQEIASIWLKQKINVEHVTL</sequence>
<reference key="1">
    <citation type="journal article" date="2006" name="Proc. Natl. Acad. Sci. U.S.A.">
        <title>Molecular genetic anatomy of inter- and intraserotype variation in the human bacterial pathogen group A Streptococcus.</title>
        <authorList>
            <person name="Beres S.B."/>
            <person name="Richter E.W."/>
            <person name="Nagiec M.J."/>
            <person name="Sumby P."/>
            <person name="Porcella S.F."/>
            <person name="DeLeo F.R."/>
            <person name="Musser J.M."/>
        </authorList>
    </citation>
    <scope>NUCLEOTIDE SEQUENCE [LARGE SCALE GENOMIC DNA]</scope>
    <source>
        <strain>MGAS9429</strain>
    </source>
</reference>
<name>MURI_STRPC</name>
<feature type="chain" id="PRO_1000047623" description="Glutamate racemase">
    <location>
        <begin position="1"/>
        <end position="264"/>
    </location>
</feature>
<feature type="active site" description="Proton donor/acceptor" evidence="1">
    <location>
        <position position="73"/>
    </location>
</feature>
<feature type="active site" description="Proton donor/acceptor" evidence="1">
    <location>
        <position position="183"/>
    </location>
</feature>
<feature type="binding site" evidence="1">
    <location>
        <begin position="10"/>
        <end position="11"/>
    </location>
    <ligand>
        <name>substrate</name>
    </ligand>
</feature>
<feature type="binding site" evidence="1">
    <location>
        <begin position="42"/>
        <end position="43"/>
    </location>
    <ligand>
        <name>substrate</name>
    </ligand>
</feature>
<feature type="binding site" evidence="1">
    <location>
        <begin position="74"/>
        <end position="75"/>
    </location>
    <ligand>
        <name>substrate</name>
    </ligand>
</feature>
<feature type="binding site" evidence="1">
    <location>
        <begin position="184"/>
        <end position="185"/>
    </location>
    <ligand>
        <name>substrate</name>
    </ligand>
</feature>
<evidence type="ECO:0000255" key="1">
    <source>
        <dbReference type="HAMAP-Rule" id="MF_00258"/>
    </source>
</evidence>
<proteinExistence type="inferred from homology"/>
<accession>Q1JNA9</accession>
<organism>
    <name type="scientific">Streptococcus pyogenes serotype M12 (strain MGAS9429)</name>
    <dbReference type="NCBI Taxonomy" id="370551"/>
    <lineage>
        <taxon>Bacteria</taxon>
        <taxon>Bacillati</taxon>
        <taxon>Bacillota</taxon>
        <taxon>Bacilli</taxon>
        <taxon>Lactobacillales</taxon>
        <taxon>Streptococcaceae</taxon>
        <taxon>Streptococcus</taxon>
    </lineage>
</organism>
<keyword id="KW-0133">Cell shape</keyword>
<keyword id="KW-0961">Cell wall biogenesis/degradation</keyword>
<keyword id="KW-0413">Isomerase</keyword>
<keyword id="KW-0573">Peptidoglycan synthesis</keyword>
<gene>
    <name evidence="1" type="primary">murI</name>
    <name type="ordered locus">MGAS9429_Spy0302</name>
</gene>